<evidence type="ECO:0000303" key="1">
    <source>
    </source>
</evidence>
<evidence type="ECO:0000305" key="2"/>
<evidence type="ECO:0000305" key="3">
    <source>
    </source>
</evidence>
<proteinExistence type="predicted"/>
<reference key="1">
    <citation type="journal article" date="2011" name="Mol. Plant Pathol.">
        <title>The Botrytis cinerea phytotoxin botcinic acid requires two polyketide synthases for production and has a redundant role in virulence with botrydial.</title>
        <authorList>
            <person name="Dalmais B."/>
            <person name="Schumacher J."/>
            <person name="Moraga J."/>
            <person name="Le Pecheur P."/>
            <person name="Tudzynski B."/>
            <person name="Collado I.G."/>
            <person name="Viaud M."/>
        </authorList>
    </citation>
    <scope>NUCLEOTIDE SEQUENCE [GENOMIC DNA]</scope>
    <scope>FUNCTION</scope>
    <source>
        <strain>B05.10</strain>
    </source>
</reference>
<reference key="2">
    <citation type="journal article" date="2013" name="ChemBioChem">
        <title>A shared biosynthetic pathway for botcinins and botrylactones revealed through gene deletions.</title>
        <authorList>
            <person name="Massaroli M."/>
            <person name="Moraga J."/>
            <person name="Bastos Borges K."/>
            <person name="Ramirez-Fernandez J."/>
            <person name="Viaud M."/>
            <person name="Gonzalez Collado I."/>
            <person name="Duran-Patron R."/>
            <person name="Hernandez-Galan R."/>
        </authorList>
    </citation>
    <scope>FUNCTION</scope>
</reference>
<organism>
    <name type="scientific">Botryotinia fuckeliana (strain B05.10)</name>
    <name type="common">Noble rot fungus</name>
    <name type="synonym">Botrytis cinerea</name>
    <dbReference type="NCBI Taxonomy" id="332648"/>
    <lineage>
        <taxon>Eukaryota</taxon>
        <taxon>Fungi</taxon>
        <taxon>Dikarya</taxon>
        <taxon>Ascomycota</taxon>
        <taxon>Pezizomycotina</taxon>
        <taxon>Leotiomycetes</taxon>
        <taxon>Helotiales</taxon>
        <taxon>Sclerotiniaceae</taxon>
        <taxon>Botrytis</taxon>
    </lineage>
</organism>
<protein>
    <recommendedName>
        <fullName evidence="1">Transcription factor BOA15</fullName>
    </recommendedName>
    <alternativeName>
        <fullName evidence="1">Botcinic acid biosynthesis cluster B protein 15</fullName>
    </alternativeName>
</protein>
<accession>A6SSW6</accession>
<dbReference type="EMBL" id="FR718884">
    <property type="protein sequence ID" value="CBX87038.1"/>
    <property type="molecule type" value="Genomic_DNA"/>
</dbReference>
<dbReference type="RefSeq" id="XP_001545619.1">
    <property type="nucleotide sequence ID" value="XM_001545569.1"/>
</dbReference>
<dbReference type="EnsemblFungi" id="Bcin01g00140.1">
    <property type="protein sequence ID" value="Bcin01p00140.1"/>
    <property type="gene ID" value="Bcin01g00140"/>
</dbReference>
<dbReference type="VEuPathDB" id="FungiDB:Bcin01g00140"/>
<dbReference type="OMA" id="NCARYAV"/>
<dbReference type="OrthoDB" id="3862662at2759"/>
<dbReference type="GO" id="GO:0005634">
    <property type="term" value="C:nucleus"/>
    <property type="evidence" value="ECO:0007669"/>
    <property type="project" value="UniProtKB-SubCell"/>
</dbReference>
<dbReference type="GO" id="GO:0003677">
    <property type="term" value="F:DNA binding"/>
    <property type="evidence" value="ECO:0007669"/>
    <property type="project" value="InterPro"/>
</dbReference>
<dbReference type="GO" id="GO:0008270">
    <property type="term" value="F:zinc ion binding"/>
    <property type="evidence" value="ECO:0007669"/>
    <property type="project" value="InterPro"/>
</dbReference>
<dbReference type="GO" id="GO:0006351">
    <property type="term" value="P:DNA-templated transcription"/>
    <property type="evidence" value="ECO:0007669"/>
    <property type="project" value="InterPro"/>
</dbReference>
<dbReference type="CDD" id="cd12148">
    <property type="entry name" value="fungal_TF_MHR"/>
    <property type="match status" value="1"/>
</dbReference>
<dbReference type="InterPro" id="IPR007219">
    <property type="entry name" value="Transcription_factor_dom_fun"/>
</dbReference>
<dbReference type="Pfam" id="PF04082">
    <property type="entry name" value="Fungal_trans"/>
    <property type="match status" value="1"/>
</dbReference>
<sequence length="179" mass="20022">MQAFYLDSEVWSSFDFTRQPSSVILSAEVLAYLDDVDETKRKYFSSTHTWMPIISKMRLNRLTDSAVGKTRVDIALLLLCMKLVPDGVAEDENKPSDLYLTAKQLCATLERNCLLTLRSLQANLLLAVYEVGHAIYPAAALTVGCCVRQGVALGLHNKDAPQLGGNVRSWVDWEERQRG</sequence>
<name>BOA15_BOTFB</name>
<keyword id="KW-0539">Nucleus</keyword>
<keyword id="KW-0804">Transcription</keyword>
<keyword id="KW-0805">Transcription regulation</keyword>
<keyword id="KW-0843">Virulence</keyword>
<comment type="function">
    <text evidence="3">Transcription factor that probably coregulates the gene clusters that mediates the biosynthesis of botcinin acid and its botcinin derivatives, acetate-derived polyketides that contribute to virulence when combined with the sesquiterpene botrydial (Probable). Botcinin acid and its derivatives have been shown to induce chlorosis and necrosis during host plant infection, but also have antifungal activities (Probable).</text>
</comment>
<comment type="subcellular location">
    <subcellularLocation>
        <location evidence="2">Nucleus</location>
    </subcellularLocation>
</comment>
<gene>
    <name evidence="1" type="primary">BOA15</name>
</gene>
<feature type="chain" id="PRO_0000444651" description="Transcription factor BOA15">
    <location>
        <begin position="1"/>
        <end position="179"/>
    </location>
</feature>